<keyword id="KW-0472">Membrane</keyword>
<keyword id="KW-1185">Reference proteome</keyword>
<keyword id="KW-0812">Transmembrane</keyword>
<keyword id="KW-1133">Transmembrane helix</keyword>
<keyword id="KW-0813">Transport</keyword>
<comment type="function">
    <text evidence="1">Heme transporter.</text>
</comment>
<comment type="subcellular location">
    <subcellularLocation>
        <location evidence="4">Membrane</location>
        <topology evidence="4">Multi-pass membrane protein</topology>
    </subcellularLocation>
</comment>
<comment type="induction">
    <text evidence="3">Constitutively expressed. Not regulated by heme level.</text>
</comment>
<comment type="similarity">
    <text evidence="4">Belongs to the HRG family.</text>
</comment>
<feature type="chain" id="PRO_0000348586" description="Heme transporter hrg-6">
    <location>
        <begin position="1"/>
        <end position="161"/>
    </location>
</feature>
<feature type="transmembrane region" description="Helical" evidence="2">
    <location>
        <begin position="13"/>
        <end position="33"/>
    </location>
</feature>
<feature type="transmembrane region" description="Helical" evidence="2">
    <location>
        <begin position="38"/>
        <end position="58"/>
    </location>
</feature>
<feature type="transmembrane region" description="Helical" evidence="2">
    <location>
        <begin position="75"/>
        <end position="95"/>
    </location>
</feature>
<feature type="transmembrane region" description="Helical" evidence="2">
    <location>
        <begin position="115"/>
        <end position="135"/>
    </location>
</feature>
<proteinExistence type="evidence at transcript level"/>
<name>HRG6_CAEEL</name>
<gene>
    <name type="primary">hrg-6</name>
    <name type="ORF">F36H1.10</name>
</gene>
<dbReference type="EMBL" id="Z68760">
    <property type="protein sequence ID" value="CAE17823.1"/>
    <property type="molecule type" value="Genomic_DNA"/>
</dbReference>
<dbReference type="RefSeq" id="NP_001255528.1">
    <property type="nucleotide sequence ID" value="NM_001268599.2"/>
</dbReference>
<dbReference type="FunCoup" id="Q7YTM7">
    <property type="interactions" value="113"/>
</dbReference>
<dbReference type="STRING" id="6239.F36H1.10a.1"/>
<dbReference type="TCDB" id="2.A.110.1.5">
    <property type="family name" value="the heme transporter, heme-responsive gene protein (hrg) family"/>
</dbReference>
<dbReference type="PaxDb" id="6239-F36H1.10a"/>
<dbReference type="EnsemblMetazoa" id="F36H1.10a.1">
    <property type="protein sequence ID" value="F36H1.10a.1"/>
    <property type="gene ID" value="WBGene00009495"/>
</dbReference>
<dbReference type="GeneID" id="3565935"/>
<dbReference type="KEGG" id="cel:CELE_F36H1.10"/>
<dbReference type="UCSC" id="F36H1.10">
    <property type="organism name" value="c. elegans"/>
</dbReference>
<dbReference type="AGR" id="WB:WBGene00009495"/>
<dbReference type="CTD" id="3565935"/>
<dbReference type="WormBase" id="F36H1.10a">
    <property type="protein sequence ID" value="CE34850"/>
    <property type="gene ID" value="WBGene00009495"/>
    <property type="gene designation" value="hrg-6"/>
</dbReference>
<dbReference type="eggNOG" id="ENOG502TGTQ">
    <property type="taxonomic scope" value="Eukaryota"/>
</dbReference>
<dbReference type="GeneTree" id="ENSGT00390000002307"/>
<dbReference type="HOGENOM" id="CLU_094341_0_0_1"/>
<dbReference type="InParanoid" id="Q7YTM7"/>
<dbReference type="OMA" id="FWINLIV"/>
<dbReference type="OrthoDB" id="5814279at2759"/>
<dbReference type="PhylomeDB" id="Q7YTM7"/>
<dbReference type="PRO" id="PR:Q7YTM7"/>
<dbReference type="Proteomes" id="UP000001940">
    <property type="component" value="Chromosome IV"/>
</dbReference>
<dbReference type="Bgee" id="WBGene00009495">
    <property type="expression patterns" value="Expressed in larva and 3 other cell types or tissues"/>
</dbReference>
<dbReference type="ExpressionAtlas" id="Q7YTM7">
    <property type="expression patterns" value="baseline and differential"/>
</dbReference>
<dbReference type="GO" id="GO:0005765">
    <property type="term" value="C:lysosomal membrane"/>
    <property type="evidence" value="ECO:0000318"/>
    <property type="project" value="GO_Central"/>
</dbReference>
<dbReference type="GO" id="GO:0005886">
    <property type="term" value="C:plasma membrane"/>
    <property type="evidence" value="ECO:0000318"/>
    <property type="project" value="GO_Central"/>
</dbReference>
<dbReference type="GO" id="GO:0020037">
    <property type="term" value="F:heme binding"/>
    <property type="evidence" value="ECO:0000318"/>
    <property type="project" value="GO_Central"/>
</dbReference>
<dbReference type="GO" id="GO:0015232">
    <property type="term" value="F:heme transmembrane transporter activity"/>
    <property type="evidence" value="ECO:0000318"/>
    <property type="project" value="GO_Central"/>
</dbReference>
<dbReference type="GO" id="GO:0015886">
    <property type="term" value="P:heme transport"/>
    <property type="evidence" value="ECO:0000318"/>
    <property type="project" value="GO_Central"/>
</dbReference>
<dbReference type="InterPro" id="IPR026218">
    <property type="entry name" value="HRG"/>
</dbReference>
<dbReference type="PANTHER" id="PTHR31525:SF2">
    <property type="entry name" value="HEME TRANSPORTER HRG-6"/>
    <property type="match status" value="1"/>
</dbReference>
<dbReference type="PANTHER" id="PTHR31525">
    <property type="entry name" value="HEME TRANSPORTER HRG1"/>
    <property type="match status" value="1"/>
</dbReference>
<dbReference type="Pfam" id="PF16954">
    <property type="entry name" value="HRG"/>
    <property type="match status" value="2"/>
</dbReference>
<dbReference type="PRINTS" id="PR02095">
    <property type="entry name" value="TRNSPORTRHRG"/>
</dbReference>
<sequence length="161" mass="18746">MRWSLCCHINVRIAYTICGIIIGLFWACVYIFAWKNWVALAACLTATAFAFETFYFYLSVKRDTILNWKSQTFQVLFWINLIVGFLSIGGMITAIVLAATKHQGVSNKDQHGLNWWSTATWFLVMLKWTWQNAFIARYYGKLLTKSIIHPEEPDDPSTWKF</sequence>
<evidence type="ECO:0000250" key="1"/>
<evidence type="ECO:0000255" key="2"/>
<evidence type="ECO:0000269" key="3">
    <source>
    </source>
</evidence>
<evidence type="ECO:0000305" key="4"/>
<reference key="1">
    <citation type="journal article" date="1998" name="Science">
        <title>Genome sequence of the nematode C. elegans: a platform for investigating biology.</title>
        <authorList>
            <consortium name="The C. elegans sequencing consortium"/>
        </authorList>
    </citation>
    <scope>NUCLEOTIDE SEQUENCE [LARGE SCALE GENOMIC DNA]</scope>
    <source>
        <strain>Bristol N2</strain>
    </source>
</reference>
<reference key="2">
    <citation type="journal article" date="2008" name="Nature">
        <title>Haem homeostasis is regulated by the conserved and concerted functions of HRG-1 proteins.</title>
        <authorList>
            <person name="Rajagopal A."/>
            <person name="Rao A.U."/>
            <person name="Amigo J."/>
            <person name="Tian M."/>
            <person name="Upadhyay S.K."/>
            <person name="Hall C."/>
            <person name="Uhm S."/>
            <person name="Mathew M.K."/>
            <person name="Fleming M.D."/>
            <person name="Paw B.H."/>
            <person name="Krause M."/>
            <person name="Hamza I."/>
        </authorList>
    </citation>
    <scope>INDUCTION</scope>
</reference>
<accession>Q7YTM7</accession>
<protein>
    <recommendedName>
        <fullName>Heme transporter hrg-6</fullName>
    </recommendedName>
    <alternativeName>
        <fullName>Heme-responsive gene 6 protein</fullName>
        <shortName>CeHRG-6</shortName>
    </alternativeName>
</protein>
<organism>
    <name type="scientific">Caenorhabditis elegans</name>
    <dbReference type="NCBI Taxonomy" id="6239"/>
    <lineage>
        <taxon>Eukaryota</taxon>
        <taxon>Metazoa</taxon>
        <taxon>Ecdysozoa</taxon>
        <taxon>Nematoda</taxon>
        <taxon>Chromadorea</taxon>
        <taxon>Rhabditida</taxon>
        <taxon>Rhabditina</taxon>
        <taxon>Rhabditomorpha</taxon>
        <taxon>Rhabditoidea</taxon>
        <taxon>Rhabditidae</taxon>
        <taxon>Peloderinae</taxon>
        <taxon>Caenorhabditis</taxon>
    </lineage>
</organism>